<organism>
    <name type="scientific">Burkholderia mallei (strain SAVP1)</name>
    <dbReference type="NCBI Taxonomy" id="320388"/>
    <lineage>
        <taxon>Bacteria</taxon>
        <taxon>Pseudomonadati</taxon>
        <taxon>Pseudomonadota</taxon>
        <taxon>Betaproteobacteria</taxon>
        <taxon>Burkholderiales</taxon>
        <taxon>Burkholderiaceae</taxon>
        <taxon>Burkholderia</taxon>
        <taxon>pseudomallei group</taxon>
    </lineage>
</organism>
<comment type="similarity">
    <text evidence="1">Belongs to the bacterial ribosomal protein bL27 family.</text>
</comment>
<reference key="1">
    <citation type="journal article" date="2010" name="Genome Biol. Evol.">
        <title>Continuing evolution of Burkholderia mallei through genome reduction and large-scale rearrangements.</title>
        <authorList>
            <person name="Losada L."/>
            <person name="Ronning C.M."/>
            <person name="DeShazer D."/>
            <person name="Woods D."/>
            <person name="Fedorova N."/>
            <person name="Kim H.S."/>
            <person name="Shabalina S.A."/>
            <person name="Pearson T.R."/>
            <person name="Brinkac L."/>
            <person name="Tan P."/>
            <person name="Nandi T."/>
            <person name="Crabtree J."/>
            <person name="Badger J."/>
            <person name="Beckstrom-Sternberg S."/>
            <person name="Saqib M."/>
            <person name="Schutzer S.E."/>
            <person name="Keim P."/>
            <person name="Nierman W.C."/>
        </authorList>
    </citation>
    <scope>NUCLEOTIDE SEQUENCE [LARGE SCALE GENOMIC DNA]</scope>
    <source>
        <strain>SAVP1</strain>
    </source>
</reference>
<name>RL27_BURMS</name>
<dbReference type="EMBL" id="CP000526">
    <property type="protein sequence ID" value="ABM52713.1"/>
    <property type="molecule type" value="Genomic_DNA"/>
</dbReference>
<dbReference type="RefSeq" id="WP_004194025.1">
    <property type="nucleotide sequence ID" value="NC_008785.1"/>
</dbReference>
<dbReference type="SMR" id="A1V0P2"/>
<dbReference type="GeneID" id="93061604"/>
<dbReference type="KEGG" id="bmv:BMASAVP1_A0445"/>
<dbReference type="HOGENOM" id="CLU_095424_4_1_4"/>
<dbReference type="GO" id="GO:0022625">
    <property type="term" value="C:cytosolic large ribosomal subunit"/>
    <property type="evidence" value="ECO:0007669"/>
    <property type="project" value="TreeGrafter"/>
</dbReference>
<dbReference type="GO" id="GO:0003735">
    <property type="term" value="F:structural constituent of ribosome"/>
    <property type="evidence" value="ECO:0007669"/>
    <property type="project" value="InterPro"/>
</dbReference>
<dbReference type="GO" id="GO:0006412">
    <property type="term" value="P:translation"/>
    <property type="evidence" value="ECO:0007669"/>
    <property type="project" value="UniProtKB-UniRule"/>
</dbReference>
<dbReference type="FunFam" id="2.40.50.100:FF:000001">
    <property type="entry name" value="50S ribosomal protein L27"/>
    <property type="match status" value="1"/>
</dbReference>
<dbReference type="Gene3D" id="2.40.50.100">
    <property type="match status" value="1"/>
</dbReference>
<dbReference type="HAMAP" id="MF_00539">
    <property type="entry name" value="Ribosomal_bL27"/>
    <property type="match status" value="1"/>
</dbReference>
<dbReference type="InterPro" id="IPR001684">
    <property type="entry name" value="Ribosomal_bL27"/>
</dbReference>
<dbReference type="InterPro" id="IPR018261">
    <property type="entry name" value="Ribosomal_bL27_CS"/>
</dbReference>
<dbReference type="NCBIfam" id="TIGR00062">
    <property type="entry name" value="L27"/>
    <property type="match status" value="1"/>
</dbReference>
<dbReference type="PANTHER" id="PTHR15893:SF0">
    <property type="entry name" value="LARGE RIBOSOMAL SUBUNIT PROTEIN BL27M"/>
    <property type="match status" value="1"/>
</dbReference>
<dbReference type="PANTHER" id="PTHR15893">
    <property type="entry name" value="RIBOSOMAL PROTEIN L27"/>
    <property type="match status" value="1"/>
</dbReference>
<dbReference type="Pfam" id="PF01016">
    <property type="entry name" value="Ribosomal_L27"/>
    <property type="match status" value="1"/>
</dbReference>
<dbReference type="PRINTS" id="PR00063">
    <property type="entry name" value="RIBOSOMALL27"/>
</dbReference>
<dbReference type="SUPFAM" id="SSF110324">
    <property type="entry name" value="Ribosomal L27 protein-like"/>
    <property type="match status" value="1"/>
</dbReference>
<dbReference type="PROSITE" id="PS00831">
    <property type="entry name" value="RIBOSOMAL_L27"/>
    <property type="match status" value="1"/>
</dbReference>
<keyword id="KW-0687">Ribonucleoprotein</keyword>
<keyword id="KW-0689">Ribosomal protein</keyword>
<protein>
    <recommendedName>
        <fullName evidence="1">Large ribosomal subunit protein bL27</fullName>
    </recommendedName>
    <alternativeName>
        <fullName evidence="3">50S ribosomal protein L27</fullName>
    </alternativeName>
</protein>
<proteinExistence type="inferred from homology"/>
<sequence>MAHKKAGGSSRNGRDSESKRLGVKVYGGQAINAGGIIVRQRGTRMHAGENVGMGKDHTLFALVDGHVKFTTKGAAKKHTVVVVPAAA</sequence>
<evidence type="ECO:0000255" key="1">
    <source>
        <dbReference type="HAMAP-Rule" id="MF_00539"/>
    </source>
</evidence>
<evidence type="ECO:0000256" key="2">
    <source>
        <dbReference type="SAM" id="MobiDB-lite"/>
    </source>
</evidence>
<evidence type="ECO:0000305" key="3"/>
<gene>
    <name evidence="1" type="primary">rpmA</name>
    <name type="ordered locus">BMASAVP1_A0445</name>
</gene>
<accession>A1V0P2</accession>
<feature type="chain" id="PRO_1000017431" description="Large ribosomal subunit protein bL27">
    <location>
        <begin position="1"/>
        <end position="87"/>
    </location>
</feature>
<feature type="region of interest" description="Disordered" evidence="2">
    <location>
        <begin position="1"/>
        <end position="21"/>
    </location>
</feature>